<keyword id="KW-0963">Cytoplasm</keyword>
<keyword id="KW-0444">Lipid biosynthesis</keyword>
<keyword id="KW-0443">Lipid metabolism</keyword>
<keyword id="KW-0594">Phospholipid biosynthesis</keyword>
<keyword id="KW-1208">Phospholipid metabolism</keyword>
<keyword id="KW-0808">Transferase</keyword>
<dbReference type="EC" id="2.3.1.274" evidence="1"/>
<dbReference type="EMBL" id="FM204883">
    <property type="protein sequence ID" value="CAW91912.1"/>
    <property type="molecule type" value="Genomic_DNA"/>
</dbReference>
<dbReference type="RefSeq" id="WP_012678768.1">
    <property type="nucleotide sequence ID" value="NC_012471.1"/>
</dbReference>
<dbReference type="SMR" id="C0MAG0"/>
<dbReference type="KEGG" id="seu:SEQ_0023"/>
<dbReference type="HOGENOM" id="CLU_039379_1_1_9"/>
<dbReference type="OrthoDB" id="9806408at2"/>
<dbReference type="UniPathway" id="UPA00085"/>
<dbReference type="Proteomes" id="UP000001365">
    <property type="component" value="Chromosome"/>
</dbReference>
<dbReference type="GO" id="GO:0005737">
    <property type="term" value="C:cytoplasm"/>
    <property type="evidence" value="ECO:0007669"/>
    <property type="project" value="UniProtKB-SubCell"/>
</dbReference>
<dbReference type="GO" id="GO:0043811">
    <property type="term" value="F:phosphate:acyl-[acyl carrier protein] acyltransferase activity"/>
    <property type="evidence" value="ECO:0007669"/>
    <property type="project" value="UniProtKB-UniRule"/>
</dbReference>
<dbReference type="GO" id="GO:0006633">
    <property type="term" value="P:fatty acid biosynthetic process"/>
    <property type="evidence" value="ECO:0007669"/>
    <property type="project" value="UniProtKB-UniRule"/>
</dbReference>
<dbReference type="GO" id="GO:0008654">
    <property type="term" value="P:phospholipid biosynthetic process"/>
    <property type="evidence" value="ECO:0007669"/>
    <property type="project" value="UniProtKB-KW"/>
</dbReference>
<dbReference type="Gene3D" id="3.40.718.10">
    <property type="entry name" value="Isopropylmalate Dehydrogenase"/>
    <property type="match status" value="1"/>
</dbReference>
<dbReference type="HAMAP" id="MF_00019">
    <property type="entry name" value="PlsX"/>
    <property type="match status" value="1"/>
</dbReference>
<dbReference type="InterPro" id="IPR003664">
    <property type="entry name" value="FA_synthesis"/>
</dbReference>
<dbReference type="InterPro" id="IPR012281">
    <property type="entry name" value="Phospholipid_synth_PlsX-like"/>
</dbReference>
<dbReference type="NCBIfam" id="TIGR00182">
    <property type="entry name" value="plsX"/>
    <property type="match status" value="1"/>
</dbReference>
<dbReference type="PANTHER" id="PTHR30100">
    <property type="entry name" value="FATTY ACID/PHOSPHOLIPID SYNTHESIS PROTEIN PLSX"/>
    <property type="match status" value="1"/>
</dbReference>
<dbReference type="PANTHER" id="PTHR30100:SF1">
    <property type="entry name" value="PHOSPHATE ACYLTRANSFERASE"/>
    <property type="match status" value="1"/>
</dbReference>
<dbReference type="Pfam" id="PF02504">
    <property type="entry name" value="FA_synthesis"/>
    <property type="match status" value="1"/>
</dbReference>
<dbReference type="PIRSF" id="PIRSF002465">
    <property type="entry name" value="Phsphlp_syn_PlsX"/>
    <property type="match status" value="1"/>
</dbReference>
<dbReference type="SUPFAM" id="SSF53659">
    <property type="entry name" value="Isocitrate/Isopropylmalate dehydrogenase-like"/>
    <property type="match status" value="1"/>
</dbReference>
<accession>C0MAG0</accession>
<sequence>MKKIAIDAMGGDYAPKAIVEGVNQAIESFSDIEIQLYGDQSRIESYLVKSDRVSIVHTDEKINSDDEPAKAIRRKKNASMVLAARAVKDGRADAVLSAGNTGALLAAGLFIIGRIKGVDRPGLLSTLPTVDGSGFDMLDLGANAENTAEHLHQYAILGSFYAKHVRGIAKPRIGLLNNGTEATKGDSLRKEVYNFLASDSSLQFIGNVEARDLMSGVADVVVADGFTGNAVLKSIEGTAMSIMGQLKSAIAVGGVKAKFGALLLKSSLYDLKDTLDYSSAGGAVLFGLKAPLVKSHGSSDAKAIFHTIKQVRTMLETDVVGQLVEEFSKESDVND</sequence>
<feature type="chain" id="PRO_1000193146" description="Phosphate acyltransferase">
    <location>
        <begin position="1"/>
        <end position="335"/>
    </location>
</feature>
<organism>
    <name type="scientific">Streptococcus equi subsp. equi (strain 4047)</name>
    <dbReference type="NCBI Taxonomy" id="553482"/>
    <lineage>
        <taxon>Bacteria</taxon>
        <taxon>Bacillati</taxon>
        <taxon>Bacillota</taxon>
        <taxon>Bacilli</taxon>
        <taxon>Lactobacillales</taxon>
        <taxon>Streptococcaceae</taxon>
        <taxon>Streptococcus</taxon>
    </lineage>
</organism>
<comment type="function">
    <text evidence="1">Catalyzes the reversible formation of acyl-phosphate (acyl-PO(4)) from acyl-[acyl-carrier-protein] (acyl-ACP). This enzyme utilizes acyl-ACP as fatty acyl donor, but not acyl-CoA.</text>
</comment>
<comment type="catalytic activity">
    <reaction evidence="1">
        <text>a fatty acyl-[ACP] + phosphate = an acyl phosphate + holo-[ACP]</text>
        <dbReference type="Rhea" id="RHEA:42292"/>
        <dbReference type="Rhea" id="RHEA-COMP:9685"/>
        <dbReference type="Rhea" id="RHEA-COMP:14125"/>
        <dbReference type="ChEBI" id="CHEBI:43474"/>
        <dbReference type="ChEBI" id="CHEBI:59918"/>
        <dbReference type="ChEBI" id="CHEBI:64479"/>
        <dbReference type="ChEBI" id="CHEBI:138651"/>
        <dbReference type="EC" id="2.3.1.274"/>
    </reaction>
</comment>
<comment type="pathway">
    <text evidence="1">Lipid metabolism; phospholipid metabolism.</text>
</comment>
<comment type="subunit">
    <text evidence="1">Homodimer. Probably interacts with PlsY.</text>
</comment>
<comment type="subcellular location">
    <subcellularLocation>
        <location evidence="1">Cytoplasm</location>
    </subcellularLocation>
    <text evidence="1">Associated with the membrane possibly through PlsY.</text>
</comment>
<comment type="similarity">
    <text evidence="1">Belongs to the PlsX family.</text>
</comment>
<gene>
    <name evidence="1" type="primary">plsX</name>
    <name type="ordered locus">SEQ_0023</name>
</gene>
<evidence type="ECO:0000255" key="1">
    <source>
        <dbReference type="HAMAP-Rule" id="MF_00019"/>
    </source>
</evidence>
<name>PLSX_STRE4</name>
<proteinExistence type="inferred from homology"/>
<reference key="1">
    <citation type="journal article" date="2009" name="PLoS Pathog.">
        <title>Genomic evidence for the evolution of Streptococcus equi: host restriction, increased virulence, and genetic exchange with human pathogens.</title>
        <authorList>
            <person name="Holden M.T.G."/>
            <person name="Heather Z."/>
            <person name="Paillot R."/>
            <person name="Steward K.F."/>
            <person name="Webb K."/>
            <person name="Ainslie F."/>
            <person name="Jourdan T."/>
            <person name="Bason N.C."/>
            <person name="Holroyd N.E."/>
            <person name="Mungall K."/>
            <person name="Quail M.A."/>
            <person name="Sanders M."/>
            <person name="Simmonds M."/>
            <person name="Willey D."/>
            <person name="Brooks K."/>
            <person name="Aanensen D.M."/>
            <person name="Spratt B.G."/>
            <person name="Jolley K.A."/>
            <person name="Maiden M.C.J."/>
            <person name="Kehoe M."/>
            <person name="Chanter N."/>
            <person name="Bentley S.D."/>
            <person name="Robinson C."/>
            <person name="Maskell D.J."/>
            <person name="Parkhill J."/>
            <person name="Waller A.S."/>
        </authorList>
    </citation>
    <scope>NUCLEOTIDE SEQUENCE [LARGE SCALE GENOMIC DNA]</scope>
    <source>
        <strain>4047</strain>
    </source>
</reference>
<protein>
    <recommendedName>
        <fullName evidence="1">Phosphate acyltransferase</fullName>
        <ecNumber evidence="1">2.3.1.274</ecNumber>
    </recommendedName>
    <alternativeName>
        <fullName evidence="1">Acyl-ACP phosphotransacylase</fullName>
    </alternativeName>
    <alternativeName>
        <fullName evidence="1">Acyl-[acyl-carrier-protein]--phosphate acyltransferase</fullName>
    </alternativeName>
    <alternativeName>
        <fullName evidence="1">Phosphate-acyl-ACP acyltransferase</fullName>
    </alternativeName>
</protein>